<comment type="function">
    <text evidence="2 11 12 13 14 15 16 19 20">Cell surface receptor that binds to glycosaminoglycans, including chondroitin sulfate proteoglycans and heparan sulfate proteoglycans (PubMed:19833921, PubMed:21454754, PubMed:22406547). Binding to chondroitin sulfate and heparan sulfate proteoglycans has opposite effects on PTPRS oligomerization and regulation of neurite outgrowth (PubMed:21454754). Contributes to the inhibition of neurite and axonal outgrowth by chondroitin sulfate proteoglycans, also after nerve transection (PubMed:15797710, PubMed:19780196, PubMed:19833921, PubMed:21454754, PubMed:22406547, PubMed:22519304). Plays a role in stimulating neurite outgrowth in response to the heparan sulfate proteoglycan GPC2 (PubMed:21454754). Required for normal brain development, especially for normal development of the pituitary gland and the olfactory bulb (PubMed:10080191). Functions as a tyrosine phosphatase (PubMed:7529177). Mediates dephosphorylation of NTRK1, NTRK2 and NTRK3 (By similarity). Plays a role in down-regulation of signaling cascades that lead to the activation of Akt and MAP kinases (PubMed:15797710). Down-regulates TLR9-mediated activation of NF-kappa-B, as well as production of TNF, interferon alpha and interferon beta (PubMed:26231120).</text>
</comment>
<comment type="catalytic activity">
    <reaction evidence="9 20 26">
        <text>O-phospho-L-tyrosyl-[protein] + H2O = L-tyrosyl-[protein] + phosphate</text>
        <dbReference type="Rhea" id="RHEA:10684"/>
        <dbReference type="Rhea" id="RHEA-COMP:10136"/>
        <dbReference type="Rhea" id="RHEA-COMP:20101"/>
        <dbReference type="ChEBI" id="CHEBI:15377"/>
        <dbReference type="ChEBI" id="CHEBI:43474"/>
        <dbReference type="ChEBI" id="CHEBI:46858"/>
        <dbReference type="ChEBI" id="CHEBI:61978"/>
        <dbReference type="EC" id="3.1.3.48"/>
    </reaction>
</comment>
<comment type="subunit">
    <text evidence="3 4 15 18">Binding to large heparan sulfate proteoglycan structures promotes oligomerization (PubMed:21454754). Binding to chondroitin sulfate proteoglycan does not lead to oligomerization (PubMed:21454754). Interacts (via Ig-like domains) with NTRK3 (PubMed:25385546). Interacts (via Ig-like domains) with NTRK1, but does not form detectable complexes with NTRK2 (By similarity). Interacts with PPFIA1, PPFIA2 and PPFIA3 (By similarity).</text>
</comment>
<comment type="subcellular location">
    <subcellularLocation>
        <location evidence="19">Cell membrane</location>
        <topology evidence="25">Single-pass type I membrane protein</topology>
    </subcellularLocation>
    <subcellularLocation>
        <location evidence="15">Cell projection</location>
        <location evidence="15">Axon</location>
    </subcellularLocation>
    <subcellularLocation>
        <location evidence="15">Perikaryon</location>
    </subcellularLocation>
    <subcellularLocation>
        <location evidence="4">Cytoplasmic vesicle</location>
        <location evidence="4">Secretory vesicle</location>
        <location evidence="4">Synaptic vesicle membrane</location>
    </subcellularLocation>
    <subcellularLocation>
        <location evidence="4">Synapse</location>
        <location evidence="4">Synaptosome</location>
    </subcellularLocation>
    <subcellularLocation>
        <location evidence="4">Postsynaptic density</location>
    </subcellularLocation>
    <subcellularLocation>
        <location evidence="15">Cell projection</location>
        <location evidence="15">Neuron projection</location>
    </subcellularLocation>
    <subcellularLocation>
        <location evidence="15">Cell projection</location>
        <location evidence="15">Growth cone</location>
    </subcellularLocation>
    <text evidence="15 19">Is rapidly internalized when dendritic cells are stimulated with the TLR9 ligand cytidine-phosphate-guanosine (CpG) (PubMed:26231120). Detected in a punctate pattern along neurites and axon growth cones (PubMed:21454754).</text>
</comment>
<comment type="alternative products">
    <event type="alternative splicing"/>
    <isoform>
        <id>B0V2N1-1</id>
        <name>1</name>
        <sequence type="displayed"/>
    </isoform>
    <isoform>
        <id>B0V2N1-2</id>
        <name>2</name>
        <sequence type="described" ref="VSP_036062"/>
    </isoform>
    <isoform>
        <id>B0V2N1-3</id>
        <name>3</name>
        <sequence type="described" ref="VSP_036058 VSP_036059"/>
    </isoform>
    <isoform>
        <id>B0V2N1-4</id>
        <name>4</name>
        <sequence type="described" ref="VSP_036058 VSP_036059 VSP_036061"/>
    </isoform>
    <isoform>
        <id>B0V2N1-5</id>
        <name>5</name>
        <sequence type="described" ref="VSP_036057"/>
    </isoform>
    <isoform>
        <id>B0V2N1-6</id>
        <name>6</name>
        <sequence type="described" ref="VSP_036060"/>
    </isoform>
</comment>
<comment type="tissue specificity">
    <text evidence="12 13 17 19 20">Detected in brain cortex, cerebellum and thoracic spinal cord (at protein level) (PubMed:19780196, PubMed:22519304). Detected in motor cortex and white matter of the spinal cord, but not in spinal cord gray matter (PubMed:19780196). Isoform 1 and isoform 6 are predominantly expressed in the brain (cerebrum and cerebellum) and to a lesser extent in the heart and skeletal muscle. Also found in neuronal-derived cell lines (PubMed:7529177). Detected in the ganglion cell layer of the retina and in glial cells along the optic nerve (PubMed:15797710). Detected in bone marrow and spleen plasmacytoid dendritic cells (PubMed:26231120).</text>
</comment>
<comment type="developmental stage">
    <text evidence="20">Expression is seen in embryos between 8 dpc and 16 dpc and a peak expression is seen at 14 dpc.</text>
</comment>
<comment type="PTM">
    <text evidence="1">A cleavage occurs, separating the extracellular domain from the transmembrane segment. This process called 'ectodomain shedding' is thought to be involved in receptor desensitization, signal transduction and/or membrane localization (By similarity).</text>
</comment>
<comment type="disruption phenotype">
    <text evidence="11 12 13 14 15 16 17">Mating heterozygous mice gives rise to Ptprs deficient mice at the expected Mendelian rate, but the pups are somewhat lighter than their littermates at birth and display strongly impaired weight gain (PubMed:10080191). After about three weeks, mutant mice weigh only 50 to 55% of normal littermates, possibly due to reduced Igf1 levels in blood serum (PubMed:10080191). Pups born after crossing Ptprs deficient mice display about 41% lethality during the first day after birth (PubMed:10080191). Adult mutants have a reduced overall brain size, with a dramatic decrease in the size of the olfactory bulb (PubMed:10080191). As a consequence, mutant mice have strongly impaired ability to perceive repellent smells (PubMed:10080191). Females are less often in estrus (PubMed:10080191). Besides, mutant mice display a decreased overall size of the pituitary glands; relative to the total size, the intermediary lobe is enlarged with a concomitant decrease in the size of the anterior and posterior lobes (PubMed:10080191). Likewise, the size of the hypothalamus is decreased (PubMed:10080191). No visible effect on the structure of the retina and the optic nerve (PubMed:15797710). Mutant mice show increased axon outgrowth from retinal ganglion cells after optic nerve transection (PubMed:15797710). Mutant mice display increased axon outgrowth after spinal cord injury (PubMed:19780196, PubMed:19833921). In aging mice, mossy fibers in the CA3C region of the hippocampus show increased sprouting (PubMed:22519304). No difference in mossy fiber sprouting is seen in the CA3A region of the hippocampus (PubMed:22519304). After kainate-induced seizures, mutant mice show increased mossy fiber sprouting in both the CA3C and the CA3A region of the hippocampus (PubMed:22519304). Mutant mice display a slight increase in dendrite length and dendrite spine density in pyramidal cells in the CA1 region of the hippocampus, and subtle changes in miniature AMPAR-mediated excitatory post-synaptic currents (PubMed:22519304). Dorsal root ganglion neurons from mutant mice show decreased stimulation of neurite outgrowth in response to the heparan sulfate proteoglycan GPC2 (PubMed:21454754). Cerebellar granule neurons and dorsal root ganglion neurons from mutant mice show decreased inhibition of neurite outgrowth in response to chondroitin sulfate proteoglycan (PubMed:19780196, PubMed:19833921, PubMed:21454754, PubMed:22406547). Sensory neurons show increased axon outgrowth after spinal cord crush injury (PubMed:19833921). After optic nerve crush injury, mutant mice show no increase in axon regeneration (PubMed:22406547). Combined disruption of Rtn4r, Rtn4rl1 and Ptprs increases axon regeneration after injury (PubMed:22406547).</text>
</comment>
<comment type="similarity">
    <text evidence="25">Belongs to the protein-tyrosine phosphatase family. Receptor class 2A subfamily.</text>
</comment>
<protein>
    <recommendedName>
        <fullName>Receptor-type tyrosine-protein phosphatase S</fullName>
        <shortName>R-PTP-S</shortName>
        <ecNumber evidence="20 26">3.1.3.48</ecNumber>
    </recommendedName>
    <alternativeName>
        <fullName>PTPNU-3</fullName>
    </alternativeName>
    <alternativeName>
        <fullName>Receptor-type tyrosine-protein phosphatase sigma</fullName>
        <shortName>R-PTP-sigma</shortName>
    </alternativeName>
</protein>
<keyword id="KW-0002">3D-structure</keyword>
<keyword id="KW-0025">Alternative splicing</keyword>
<keyword id="KW-0130">Cell adhesion</keyword>
<keyword id="KW-1003">Cell membrane</keyword>
<keyword id="KW-0966">Cell projection</keyword>
<keyword id="KW-0968">Cytoplasmic vesicle</keyword>
<keyword id="KW-1015">Disulfide bond</keyword>
<keyword id="KW-0325">Glycoprotein</keyword>
<keyword id="KW-0358">Heparin-binding</keyword>
<keyword id="KW-0378">Hydrolase</keyword>
<keyword id="KW-0393">Immunoglobulin domain</keyword>
<keyword id="KW-0472">Membrane</keyword>
<keyword id="KW-0904">Protein phosphatase</keyword>
<keyword id="KW-0675">Receptor</keyword>
<keyword id="KW-1185">Reference proteome</keyword>
<keyword id="KW-0677">Repeat</keyword>
<keyword id="KW-0732">Signal</keyword>
<keyword id="KW-0770">Synapse</keyword>
<keyword id="KW-0771">Synaptosome</keyword>
<keyword id="KW-0812">Transmembrane</keyword>
<keyword id="KW-1133">Transmembrane helix</keyword>
<accession>B0V2N1</accession>
<accession>Q3TEC3</accession>
<accession>Q3TXC9</accession>
<accession>Q4JFC7</accession>
<accession>Q5XJV4</accession>
<accession>Q64503</accession>
<accession>Q64699</accession>
<accession>Q7TT17</accession>
<reference key="1">
    <citation type="journal article" date="1994" name="Eur. J. Biochem.">
        <title>Molecular cloning and tissue-specific RNA processing of a murine receptor-type protein tyrosine phosphatase.</title>
        <authorList>
            <person name="Wagner J."/>
            <person name="Boerboom D."/>
            <person name="Tremblay M.L."/>
        </authorList>
    </citation>
    <scope>NUCLEOTIDE SEQUENCE [MRNA] (ISOFORMS 1 AND 6)</scope>
    <scope>CATALYTIC ACTIVITY</scope>
    <scope>DEVELOPMENTAL STAGE</scope>
    <scope>TISSUE SPECIFICITY</scope>
    <source>
        <strain>BALB/cJ</strain>
        <tissue>Embryonic kidney</tissue>
    </source>
</reference>
<reference key="2">
    <citation type="submission" date="1994-02" db="EMBL/GenBank/DDBJ databases">
        <title>Expression of a novel murine receptor protein tyrosine phosphatase in the thymus.</title>
        <authorList>
            <person name="Ogata M."/>
            <person name="Sawada M."/>
            <person name="Hamaoka T."/>
        </authorList>
    </citation>
    <scope>NUCLEOTIDE SEQUENCE [MRNA] (ISOFORM 2)</scope>
    <source>
        <strain>C57BL/6J</strain>
        <tissue>Thymus</tissue>
    </source>
</reference>
<reference key="3">
    <citation type="journal article" date="2005" name="Science">
        <title>The transcriptional landscape of the mammalian genome.</title>
        <authorList>
            <person name="Carninci P."/>
            <person name="Kasukawa T."/>
            <person name="Katayama S."/>
            <person name="Gough J."/>
            <person name="Frith M.C."/>
            <person name="Maeda N."/>
            <person name="Oyama R."/>
            <person name="Ravasi T."/>
            <person name="Lenhard B."/>
            <person name="Wells C."/>
            <person name="Kodzius R."/>
            <person name="Shimokawa K."/>
            <person name="Bajic V.B."/>
            <person name="Brenner S.E."/>
            <person name="Batalov S."/>
            <person name="Forrest A.R."/>
            <person name="Zavolan M."/>
            <person name="Davis M.J."/>
            <person name="Wilming L.G."/>
            <person name="Aidinis V."/>
            <person name="Allen J.E."/>
            <person name="Ambesi-Impiombato A."/>
            <person name="Apweiler R."/>
            <person name="Aturaliya R.N."/>
            <person name="Bailey T.L."/>
            <person name="Bansal M."/>
            <person name="Baxter L."/>
            <person name="Beisel K.W."/>
            <person name="Bersano T."/>
            <person name="Bono H."/>
            <person name="Chalk A.M."/>
            <person name="Chiu K.P."/>
            <person name="Choudhary V."/>
            <person name="Christoffels A."/>
            <person name="Clutterbuck D.R."/>
            <person name="Crowe M.L."/>
            <person name="Dalla E."/>
            <person name="Dalrymple B.P."/>
            <person name="de Bono B."/>
            <person name="Della Gatta G."/>
            <person name="di Bernardo D."/>
            <person name="Down T."/>
            <person name="Engstrom P."/>
            <person name="Fagiolini M."/>
            <person name="Faulkner G."/>
            <person name="Fletcher C.F."/>
            <person name="Fukushima T."/>
            <person name="Furuno M."/>
            <person name="Futaki S."/>
            <person name="Gariboldi M."/>
            <person name="Georgii-Hemming P."/>
            <person name="Gingeras T.R."/>
            <person name="Gojobori T."/>
            <person name="Green R.E."/>
            <person name="Gustincich S."/>
            <person name="Harbers M."/>
            <person name="Hayashi Y."/>
            <person name="Hensch T.K."/>
            <person name="Hirokawa N."/>
            <person name="Hill D."/>
            <person name="Huminiecki L."/>
            <person name="Iacono M."/>
            <person name="Ikeo K."/>
            <person name="Iwama A."/>
            <person name="Ishikawa T."/>
            <person name="Jakt M."/>
            <person name="Kanapin A."/>
            <person name="Katoh M."/>
            <person name="Kawasawa Y."/>
            <person name="Kelso J."/>
            <person name="Kitamura H."/>
            <person name="Kitano H."/>
            <person name="Kollias G."/>
            <person name="Krishnan S.P."/>
            <person name="Kruger A."/>
            <person name="Kummerfeld S.K."/>
            <person name="Kurochkin I.V."/>
            <person name="Lareau L.F."/>
            <person name="Lazarevic D."/>
            <person name="Lipovich L."/>
            <person name="Liu J."/>
            <person name="Liuni S."/>
            <person name="McWilliam S."/>
            <person name="Madan Babu M."/>
            <person name="Madera M."/>
            <person name="Marchionni L."/>
            <person name="Matsuda H."/>
            <person name="Matsuzawa S."/>
            <person name="Miki H."/>
            <person name="Mignone F."/>
            <person name="Miyake S."/>
            <person name="Morris K."/>
            <person name="Mottagui-Tabar S."/>
            <person name="Mulder N."/>
            <person name="Nakano N."/>
            <person name="Nakauchi H."/>
            <person name="Ng P."/>
            <person name="Nilsson R."/>
            <person name="Nishiguchi S."/>
            <person name="Nishikawa S."/>
            <person name="Nori F."/>
            <person name="Ohara O."/>
            <person name="Okazaki Y."/>
            <person name="Orlando V."/>
            <person name="Pang K.C."/>
            <person name="Pavan W.J."/>
            <person name="Pavesi G."/>
            <person name="Pesole G."/>
            <person name="Petrovsky N."/>
            <person name="Piazza S."/>
            <person name="Reed J."/>
            <person name="Reid J.F."/>
            <person name="Ring B.Z."/>
            <person name="Ringwald M."/>
            <person name="Rost B."/>
            <person name="Ruan Y."/>
            <person name="Salzberg S.L."/>
            <person name="Sandelin A."/>
            <person name="Schneider C."/>
            <person name="Schoenbach C."/>
            <person name="Sekiguchi K."/>
            <person name="Semple C.A."/>
            <person name="Seno S."/>
            <person name="Sessa L."/>
            <person name="Sheng Y."/>
            <person name="Shibata Y."/>
            <person name="Shimada H."/>
            <person name="Shimada K."/>
            <person name="Silva D."/>
            <person name="Sinclair B."/>
            <person name="Sperling S."/>
            <person name="Stupka E."/>
            <person name="Sugiura K."/>
            <person name="Sultana R."/>
            <person name="Takenaka Y."/>
            <person name="Taki K."/>
            <person name="Tammoja K."/>
            <person name="Tan S.L."/>
            <person name="Tang S."/>
            <person name="Taylor M.S."/>
            <person name="Tegner J."/>
            <person name="Teichmann S.A."/>
            <person name="Ueda H.R."/>
            <person name="van Nimwegen E."/>
            <person name="Verardo R."/>
            <person name="Wei C.L."/>
            <person name="Yagi K."/>
            <person name="Yamanishi H."/>
            <person name="Zabarovsky E."/>
            <person name="Zhu S."/>
            <person name="Zimmer A."/>
            <person name="Hide W."/>
            <person name="Bult C."/>
            <person name="Grimmond S.M."/>
            <person name="Teasdale R.D."/>
            <person name="Liu E.T."/>
            <person name="Brusic V."/>
            <person name="Quackenbush J."/>
            <person name="Wahlestedt C."/>
            <person name="Mattick J.S."/>
            <person name="Hume D.A."/>
            <person name="Kai C."/>
            <person name="Sasaki D."/>
            <person name="Tomaru Y."/>
            <person name="Fukuda S."/>
            <person name="Kanamori-Katayama M."/>
            <person name="Suzuki M."/>
            <person name="Aoki J."/>
            <person name="Arakawa T."/>
            <person name="Iida J."/>
            <person name="Imamura K."/>
            <person name="Itoh M."/>
            <person name="Kato T."/>
            <person name="Kawaji H."/>
            <person name="Kawagashira N."/>
            <person name="Kawashima T."/>
            <person name="Kojima M."/>
            <person name="Kondo S."/>
            <person name="Konno H."/>
            <person name="Nakano K."/>
            <person name="Ninomiya N."/>
            <person name="Nishio T."/>
            <person name="Okada M."/>
            <person name="Plessy C."/>
            <person name="Shibata K."/>
            <person name="Shiraki T."/>
            <person name="Suzuki S."/>
            <person name="Tagami M."/>
            <person name="Waki K."/>
            <person name="Watahiki A."/>
            <person name="Okamura-Oho Y."/>
            <person name="Suzuki H."/>
            <person name="Kawai J."/>
            <person name="Hayashizaki Y."/>
        </authorList>
    </citation>
    <scope>NUCLEOTIDE SEQUENCE [LARGE SCALE MRNA] (ISOFORM 5)</scope>
    <scope>NUCLEOTIDE SEQUENCE [LARGE SCALE MRNA] OF 1337-1907</scope>
    <source>
        <strain>C57BL/6J</strain>
        <strain>NOD</strain>
        <tissue>Thymus</tissue>
    </source>
</reference>
<reference key="4">
    <citation type="journal article" date="2009" name="PLoS Biol.">
        <title>Lineage-specific biology revealed by a finished genome assembly of the mouse.</title>
        <authorList>
            <person name="Church D.M."/>
            <person name="Goodstadt L."/>
            <person name="Hillier L.W."/>
            <person name="Zody M.C."/>
            <person name="Goldstein S."/>
            <person name="She X."/>
            <person name="Bult C.J."/>
            <person name="Agarwala R."/>
            <person name="Cherry J.L."/>
            <person name="DiCuccio M."/>
            <person name="Hlavina W."/>
            <person name="Kapustin Y."/>
            <person name="Meric P."/>
            <person name="Maglott D."/>
            <person name="Birtle Z."/>
            <person name="Marques A.C."/>
            <person name="Graves T."/>
            <person name="Zhou S."/>
            <person name="Teague B."/>
            <person name="Potamousis K."/>
            <person name="Churas C."/>
            <person name="Place M."/>
            <person name="Herschleb J."/>
            <person name="Runnheim R."/>
            <person name="Forrest D."/>
            <person name="Amos-Landgraf J."/>
            <person name="Schwartz D.C."/>
            <person name="Cheng Z."/>
            <person name="Lindblad-Toh K."/>
            <person name="Eichler E.E."/>
            <person name="Ponting C.P."/>
        </authorList>
    </citation>
    <scope>NUCLEOTIDE SEQUENCE [LARGE SCALE GENOMIC DNA]</scope>
    <source>
        <strain>C57BL/6J</strain>
    </source>
</reference>
<reference key="5">
    <citation type="journal article" date="2004" name="Genome Res.">
        <title>The status, quality, and expansion of the NIH full-length cDNA project: the Mammalian Gene Collection (MGC).</title>
        <authorList>
            <consortium name="The MGC Project Team"/>
        </authorList>
    </citation>
    <scope>NUCLEOTIDE SEQUENCE [LARGE SCALE MRNA] (ISOFORMS 3 AND 4)</scope>
    <source>
        <strain>C57BL/6J</strain>
        <tissue>Brain</tissue>
    </source>
</reference>
<reference key="6">
    <citation type="journal article" date="1999" name="Nat. Genet.">
        <title>Neuroendocrine dysplasia in mice lacking protein tyrosine phosphatase sigma.</title>
        <authorList>
            <person name="Elchebly M."/>
            <person name="Wagner J."/>
            <person name="Kennedy T.E."/>
            <person name="Lanctot C."/>
            <person name="Michaliszyn E."/>
            <person name="Itie A."/>
            <person name="Drouin J."/>
            <person name="Tremblay M.L."/>
        </authorList>
    </citation>
    <scope>DISRUPTION PHENOTYPE</scope>
    <scope>FUNCTION</scope>
</reference>
<reference key="7">
    <citation type="journal article" date="2005" name="Mol. Cell. Neurosci.">
        <title>Receptor protein tyrosine phosphatase sigma inhibits axon regrowth in the adult injured CNS.</title>
        <authorList>
            <person name="Sapieha P.S."/>
            <person name="Duplan L."/>
            <person name="Uetani N."/>
            <person name="Joly S."/>
            <person name="Tremblay M.L."/>
            <person name="Kennedy T.E."/>
            <person name="Di Polo A."/>
        </authorList>
    </citation>
    <scope>DISRUPTION PHENOTYPE</scope>
    <scope>FUNCTION</scope>
    <scope>TISSUE SPECIFICITY</scope>
</reference>
<reference key="8">
    <citation type="journal article" date="2009" name="Science">
        <title>PTPsigma is a receptor for chondroitin sulfate proteoglycan, an inhibitor of neural regeneration.</title>
        <authorList>
            <person name="Shen Y."/>
            <person name="Tenney A.P."/>
            <person name="Busch S.A."/>
            <person name="Horn K.P."/>
            <person name="Cuascut F.X."/>
            <person name="Liu K."/>
            <person name="He Z."/>
            <person name="Silver J."/>
            <person name="Flanagan J.G."/>
        </authorList>
    </citation>
    <scope>FUNCTION</scope>
    <scope>DISRUPTION PHENOTYPE</scope>
    <scope>MUTAGENESIS OF 68-LYS--LYS-72</scope>
</reference>
<reference key="9">
    <citation type="journal article" date="2010" name="Cell">
        <title>A tissue-specific atlas of mouse protein phosphorylation and expression.</title>
        <authorList>
            <person name="Huttlin E.L."/>
            <person name="Jedrychowski M.P."/>
            <person name="Elias J.E."/>
            <person name="Goswami T."/>
            <person name="Rad R."/>
            <person name="Beausoleil S.A."/>
            <person name="Villen J."/>
            <person name="Haas W."/>
            <person name="Sowa M.E."/>
            <person name="Gygi S.P."/>
        </authorList>
    </citation>
    <scope>IDENTIFICATION BY MASS SPECTROMETRY [LARGE SCALE ANALYSIS]</scope>
    <source>
        <tissue>Brain</tissue>
    </source>
</reference>
<reference key="10">
    <citation type="journal article" date="2010" name="Glia">
        <title>Corticospinal tract regeneration after spinal cord injury in receptor protein tyrosine phosphatase sigma deficient mice.</title>
        <authorList>
            <person name="Fry E.J."/>
            <person name="Chagnon M.J."/>
            <person name="Lopez-Vales R."/>
            <person name="Tremblay M.L."/>
            <person name="David S."/>
        </authorList>
    </citation>
    <scope>DISRUPTION PHENOTYPE</scope>
    <scope>FUNCTION</scope>
    <scope>TISSUE SPECIFICITY</scope>
</reference>
<reference key="11">
    <citation type="journal article" date="2011" name="Science">
        <title>Proteoglycan-specific molecular switch for RPTPsigma clustering and neuronal extension.</title>
        <authorList>
            <person name="Coles C.H."/>
            <person name="Shen Y."/>
            <person name="Tenney A.P."/>
            <person name="Siebold C."/>
            <person name="Sutton G.C."/>
            <person name="Lu W."/>
            <person name="Gallagher J.T."/>
            <person name="Jones E.Y."/>
            <person name="Flanagan J.G."/>
            <person name="Aricescu A.R."/>
        </authorList>
    </citation>
    <scope>DISRUPTION PHENOTYPE</scope>
    <scope>FUNCTION</scope>
    <scope>SUBCELLULAR LOCATION</scope>
    <scope>MUTAGENESIS OF 68-LYS--LYS-72</scope>
</reference>
<reference key="12">
    <citation type="journal article" date="2012" name="J. Neurochem.">
        <title>Receptor protein tyrosine phosphatase sigma regulates synapse structure, function and plasticity.</title>
        <authorList>
            <person name="Horn K.E."/>
            <person name="Xu B."/>
            <person name="Gobert D."/>
            <person name="Hamam B.N."/>
            <person name="Thompson K.M."/>
            <person name="Wu C.L."/>
            <person name="Bouchard J.F."/>
            <person name="Uetani N."/>
            <person name="Racine R.J."/>
            <person name="Tremblay M.L."/>
            <person name="Ruthazer E.S."/>
            <person name="Chapman C.A."/>
            <person name="Kennedy T.E."/>
        </authorList>
    </citation>
    <scope>DISRUPTION PHENOTYPE</scope>
    <scope>FUNCTION</scope>
    <scope>TISSUE SPECIFICITY</scope>
</reference>
<reference key="13">
    <citation type="journal article" date="2012" name="Nat. Neurosci.">
        <title>NgR1 and NgR3 are receptors for chondroitin sulfate proteoglycans.</title>
        <authorList>
            <person name="Dickendesher T.L."/>
            <person name="Baldwin K.T."/>
            <person name="Mironova Y.A."/>
            <person name="Koriyama Y."/>
            <person name="Raiker S.J."/>
            <person name="Askew K.L."/>
            <person name="Wood A."/>
            <person name="Geoffroy C.G."/>
            <person name="Zheng B."/>
            <person name="Liepmann C.D."/>
            <person name="Katagiri Y."/>
            <person name="Benowitz L.I."/>
            <person name="Geller H.M."/>
            <person name="Giger R.J."/>
        </authorList>
    </citation>
    <scope>DISRUPTION PHENOTYPE</scope>
    <scope>FUNCTION</scope>
</reference>
<reference key="14">
    <citation type="journal article" date="2014" name="Nat. Commun.">
        <title>Structural basis for extracellular cis and trans RPTPsigma signal competition in synaptogenesis.</title>
        <authorList>
            <person name="Coles C.H."/>
            <person name="Mitakidis N."/>
            <person name="Zhang P."/>
            <person name="Elegheert J."/>
            <person name="Lu W."/>
            <person name="Stoker A.W."/>
            <person name="Nakagawa T."/>
            <person name="Craig A.M."/>
            <person name="Jones E.Y."/>
            <person name="Aricescu A.R."/>
        </authorList>
    </citation>
    <scope>INTERACTION WITH NTRK3</scope>
</reference>
<reference key="15">
    <citation type="journal article" date="2015" name="Immunity">
        <title>Protein tyrosine phosphatase PTPRS is an inhibitory receptor on human and murine plasmacytoid dendritic cells.</title>
        <authorList>
            <person name="Bunin A."/>
            <person name="Sisirak V."/>
            <person name="Ghosh H.S."/>
            <person name="Grajkowska L.T."/>
            <person name="Hou Z.E."/>
            <person name="Miron M."/>
            <person name="Yang C."/>
            <person name="Ceribelli M."/>
            <person name="Uetani N."/>
            <person name="Chaperot L."/>
            <person name="Plumas J."/>
            <person name="Hendriks W."/>
            <person name="Tremblay M.L."/>
            <person name="Haecker H."/>
            <person name="Staudt L.M."/>
            <person name="Green P.H."/>
            <person name="Bhagat G."/>
            <person name="Reizis B."/>
        </authorList>
    </citation>
    <scope>FUNCTION</scope>
    <scope>SUBCELLULAR LOCATION</scope>
    <scope>TISSUE SPECIFICITY</scope>
</reference>
<reference evidence="27" key="16">
    <citation type="journal article" date="2011" name="Acta Biochim. Biophys. Sin.">
        <title>Structural insights into the homology and differences between mouse protein tyrosine phosphatase-sigma and human protein tyrosine phosphatase-sigma.</title>
        <authorList>
            <person name="Hou L."/>
            <person name="Wang J."/>
            <person name="Zhou Y."/>
            <person name="Li J."/>
            <person name="Zang Y."/>
            <person name="Li J."/>
        </authorList>
    </citation>
    <scope>X-RAY CRYSTALLOGRAPHY (2.40 ANGSTROMS) OF 1326-1901</scope>
    <scope>CATALYTIC ACTIVITY</scope>
</reference>
<organism>
    <name type="scientific">Mus musculus</name>
    <name type="common">Mouse</name>
    <dbReference type="NCBI Taxonomy" id="10090"/>
    <lineage>
        <taxon>Eukaryota</taxon>
        <taxon>Metazoa</taxon>
        <taxon>Chordata</taxon>
        <taxon>Craniata</taxon>
        <taxon>Vertebrata</taxon>
        <taxon>Euteleostomi</taxon>
        <taxon>Mammalia</taxon>
        <taxon>Eutheria</taxon>
        <taxon>Euarchontoglires</taxon>
        <taxon>Glires</taxon>
        <taxon>Rodentia</taxon>
        <taxon>Myomorpha</taxon>
        <taxon>Muroidea</taxon>
        <taxon>Muridae</taxon>
        <taxon>Murinae</taxon>
        <taxon>Mus</taxon>
        <taxon>Mus</taxon>
    </lineage>
</organism>
<proteinExistence type="evidence at protein level"/>
<name>PTPRS_MOUSE</name>
<feature type="signal peptide" evidence="5">
    <location>
        <begin position="1"/>
        <end position="29"/>
    </location>
</feature>
<feature type="chain" id="PRO_0000358321" description="Receptor-type tyrosine-protein phosphatase S">
    <location>
        <begin position="30"/>
        <end position="1907"/>
    </location>
</feature>
<feature type="topological domain" description="Extracellular" evidence="5">
    <location>
        <begin position="30"/>
        <end position="1257"/>
    </location>
</feature>
<feature type="transmembrane region" description="Helical" evidence="5">
    <location>
        <begin position="1258"/>
        <end position="1278"/>
    </location>
</feature>
<feature type="topological domain" description="Cytoplasmic" evidence="5">
    <location>
        <begin position="1279"/>
        <end position="1907"/>
    </location>
</feature>
<feature type="domain" description="Ig-like C2-type 1">
    <location>
        <begin position="33"/>
        <end position="123"/>
    </location>
</feature>
<feature type="domain" description="Ig-like C2-type 2">
    <location>
        <begin position="135"/>
        <end position="224"/>
    </location>
</feature>
<feature type="domain" description="Ig-like C2-type 3">
    <location>
        <begin position="232"/>
        <end position="314"/>
    </location>
</feature>
<feature type="domain" description="Fibronectin type-III 1" evidence="8">
    <location>
        <begin position="321"/>
        <end position="411"/>
    </location>
</feature>
<feature type="domain" description="Fibronectin type-III 2" evidence="8">
    <location>
        <begin position="416"/>
        <end position="510"/>
    </location>
</feature>
<feature type="domain" description="Fibronectin type-III 3" evidence="8">
    <location>
        <begin position="514"/>
        <end position="603"/>
    </location>
</feature>
<feature type="domain" description="Fibronectin type-III 4" evidence="8">
    <location>
        <begin position="608"/>
        <end position="705"/>
    </location>
</feature>
<feature type="domain" description="Fibronectin type-III 5" evidence="8">
    <location>
        <begin position="710"/>
        <end position="809"/>
    </location>
</feature>
<feature type="domain" description="Fibronectin type-III 6" evidence="8">
    <location>
        <begin position="810"/>
        <end position="906"/>
    </location>
</feature>
<feature type="domain" description="Fibronectin type-III 7" evidence="8">
    <location>
        <begin position="907"/>
        <end position="1008"/>
    </location>
</feature>
<feature type="domain" description="Fibronectin type-III 8" evidence="8">
    <location>
        <begin position="1011"/>
        <end position="1095"/>
    </location>
</feature>
<feature type="domain" description="Tyrosine-protein phosphatase 1" evidence="7">
    <location>
        <begin position="1352"/>
        <end position="1607"/>
    </location>
</feature>
<feature type="domain" description="Tyrosine-protein phosphatase 2" evidence="7">
    <location>
        <begin position="1639"/>
        <end position="1898"/>
    </location>
</feature>
<feature type="region of interest" description="Important for binding to glycosaminoglycan chains" evidence="14 15">
    <location>
        <begin position="68"/>
        <end position="72"/>
    </location>
</feature>
<feature type="region of interest" description="Disordered" evidence="10">
    <location>
        <begin position="691"/>
        <end position="711"/>
    </location>
</feature>
<feature type="region of interest" description="Disordered" evidence="10">
    <location>
        <begin position="1286"/>
        <end position="1313"/>
    </location>
</feature>
<feature type="compositionally biased region" description="Low complexity" evidence="10">
    <location>
        <begin position="691"/>
        <end position="700"/>
    </location>
</feature>
<feature type="compositionally biased region" description="Basic and acidic residues" evidence="10">
    <location>
        <begin position="1286"/>
        <end position="1296"/>
    </location>
</feature>
<feature type="active site" description="Phosphocysteine intermediate" evidence="1">
    <location>
        <position position="1548"/>
    </location>
</feature>
<feature type="active site" description="Phosphocysteine intermediate" evidence="1">
    <location>
        <position position="1839"/>
    </location>
</feature>
<feature type="binding site" evidence="1">
    <location>
        <position position="1516"/>
    </location>
    <ligand>
        <name>substrate</name>
    </ligand>
</feature>
<feature type="binding site" evidence="1">
    <location>
        <begin position="1548"/>
        <end position="1554"/>
    </location>
    <ligand>
        <name>substrate</name>
    </ligand>
</feature>
<feature type="binding site" evidence="1">
    <location>
        <position position="1592"/>
    </location>
    <ligand>
        <name>substrate</name>
    </ligand>
</feature>
<feature type="site" description="Cleavage" evidence="1">
    <location>
        <begin position="1197"/>
        <end position="1198"/>
    </location>
</feature>
<feature type="glycosylation site" description="N-linked (GlcNAc...) asparagine" evidence="5">
    <location>
        <position position="250"/>
    </location>
</feature>
<feature type="glycosylation site" description="N-linked (GlcNAc...) asparagine" evidence="5">
    <location>
        <position position="295"/>
    </location>
</feature>
<feature type="glycosylation site" description="N-linked (GlcNAc...) asparagine" evidence="5">
    <location>
        <position position="720"/>
    </location>
</feature>
<feature type="glycosylation site" description="N-linked (GlcNAc...) asparagine" evidence="5">
    <location>
        <position position="916"/>
    </location>
</feature>
<feature type="disulfide bond" evidence="6">
    <location>
        <begin position="54"/>
        <end position="107"/>
    </location>
</feature>
<feature type="disulfide bond" evidence="6">
    <location>
        <begin position="156"/>
        <end position="207"/>
    </location>
</feature>
<feature type="disulfide bond" evidence="6">
    <location>
        <begin position="253"/>
        <end position="298"/>
    </location>
</feature>
<feature type="splice variant" id="VSP_036057" description="In isoform 5." evidence="22">
    <location>
        <begin position="1"/>
        <end position="1315"/>
    </location>
</feature>
<feature type="splice variant" id="VSP_036058" description="In isoform 3 and isoform 4." evidence="21">
    <original>K</original>
    <variation>I</variation>
    <location>
        <position position="604"/>
    </location>
</feature>
<feature type="splice variant" id="VSP_036059" description="In isoform 3 and isoform 4." evidence="21">
    <location>
        <begin position="605"/>
        <end position="1010"/>
    </location>
</feature>
<feature type="splice variant" id="VSP_036060" description="In isoform 6." evidence="23">
    <location>
        <begin position="624"/>
        <end position="669"/>
    </location>
</feature>
<feature type="splice variant" id="VSP_036061" description="In isoform 4." evidence="21">
    <location>
        <begin position="1284"/>
        <end position="1287"/>
    </location>
</feature>
<feature type="splice variant" id="VSP_036062" description="In isoform 2." evidence="24">
    <location>
        <begin position="1519"/>
        <end position="1521"/>
    </location>
</feature>
<feature type="mutagenesis site" description="Abolishes binding to chondroitin sulfate proteoglycans. Abolishes receptor oligomerization via binding to large heparan sulfate proteoglycan structures." evidence="14 15">
    <original>KKGKK</original>
    <variation>AAGAA</variation>
    <location>
        <begin position="68"/>
        <end position="72"/>
    </location>
</feature>
<feature type="sequence conflict" description="In Ref. 1; CAA57732." evidence="25" ref="1">
    <original>R</original>
    <variation>H</variation>
    <location>
        <position position="597"/>
    </location>
</feature>
<feature type="sequence conflict" description="In Ref. 1; CAA57732." evidence="25" ref="1">
    <original>P</original>
    <variation>A</variation>
    <location>
        <position position="758"/>
    </location>
</feature>
<feature type="sequence conflict" description="In Ref. 1; CAA57732." evidence="25" ref="1">
    <original>A</original>
    <variation>G</variation>
    <location>
        <position position="834"/>
    </location>
</feature>
<feature type="sequence conflict" description="In Ref. 1; CAA57732." evidence="25" ref="1">
    <original>A</original>
    <variation>R</variation>
    <location>
        <position position="853"/>
    </location>
</feature>
<feature type="sequence conflict" description="In Ref. 1; CAA57732." evidence="25" ref="1">
    <original>A</original>
    <variation>G</variation>
    <location>
        <position position="887"/>
    </location>
</feature>
<feature type="sequence conflict" description="In Ref. 1; CAA57732." evidence="25" ref="1">
    <original>A</original>
    <variation>G</variation>
    <location>
        <position position="981"/>
    </location>
</feature>
<feature type="sequence conflict" description="In Ref. 1; CAA57732." evidence="25" ref="1">
    <original>RSL</original>
    <variation>QHV</variation>
    <location>
        <begin position="1169"/>
        <end position="1171"/>
    </location>
</feature>
<feature type="sequence conflict" description="In Ref. 1; CAA57732." evidence="25" ref="1">
    <original>E</original>
    <variation>G</variation>
    <location>
        <position position="1502"/>
    </location>
</feature>
<feature type="sequence conflict" description="In Ref. 1; CAA57732." evidence="25" ref="1">
    <original>G</original>
    <variation>S</variation>
    <location>
        <position position="1609"/>
    </location>
</feature>
<feature type="helix" evidence="28">
    <location>
        <begin position="1337"/>
        <end position="1358"/>
    </location>
</feature>
<feature type="helix" evidence="28">
    <location>
        <begin position="1368"/>
        <end position="1371"/>
    </location>
</feature>
<feature type="turn" evidence="28">
    <location>
        <begin position="1373"/>
        <end position="1375"/>
    </location>
</feature>
<feature type="helix" evidence="28">
    <location>
        <begin position="1376"/>
        <end position="1378"/>
    </location>
</feature>
<feature type="helix" evidence="28">
    <location>
        <begin position="1388"/>
        <end position="1390"/>
    </location>
</feature>
<feature type="strand" evidence="28">
    <location>
        <begin position="1391"/>
        <end position="1393"/>
    </location>
</feature>
<feature type="turn" evidence="28">
    <location>
        <begin position="1401"/>
        <end position="1404"/>
    </location>
</feature>
<feature type="strand" evidence="28">
    <location>
        <begin position="1405"/>
        <end position="1413"/>
    </location>
</feature>
<feature type="strand" evidence="28">
    <location>
        <begin position="1416"/>
        <end position="1423"/>
    </location>
</feature>
<feature type="helix" evidence="28">
    <location>
        <begin position="1428"/>
        <end position="1430"/>
    </location>
</feature>
<feature type="helix" evidence="28">
    <location>
        <begin position="1431"/>
        <end position="1440"/>
    </location>
</feature>
<feature type="strand" evidence="28">
    <location>
        <begin position="1445"/>
        <end position="1448"/>
    </location>
</feature>
<feature type="strand" evidence="28">
    <location>
        <begin position="1452"/>
        <end position="1454"/>
    </location>
</feature>
<feature type="strand" evidence="28">
    <location>
        <begin position="1457"/>
        <end position="1459"/>
    </location>
</feature>
<feature type="strand" evidence="28">
    <location>
        <begin position="1466"/>
        <end position="1472"/>
    </location>
</feature>
<feature type="strand" evidence="28">
    <location>
        <begin position="1475"/>
        <end position="1484"/>
    </location>
</feature>
<feature type="strand" evidence="28">
    <location>
        <begin position="1486"/>
        <end position="1499"/>
    </location>
</feature>
<feature type="strand" evidence="28">
    <location>
        <begin position="1503"/>
        <end position="1511"/>
    </location>
</feature>
<feature type="strand" evidence="28">
    <location>
        <begin position="1516"/>
        <end position="1518"/>
    </location>
</feature>
<feature type="helix" evidence="28">
    <location>
        <begin position="1524"/>
        <end position="1535"/>
    </location>
</feature>
<feature type="strand" evidence="28">
    <location>
        <begin position="1544"/>
        <end position="1553"/>
    </location>
</feature>
<feature type="helix" evidence="28">
    <location>
        <begin position="1554"/>
        <end position="1568"/>
    </location>
</feature>
<feature type="strand" evidence="28">
    <location>
        <begin position="1571"/>
        <end position="1574"/>
    </location>
</feature>
<feature type="helix" evidence="28">
    <location>
        <begin position="1576"/>
        <end position="1584"/>
    </location>
</feature>
<feature type="helix" evidence="28">
    <location>
        <begin position="1594"/>
        <end position="1609"/>
    </location>
</feature>
<feature type="helix" evidence="28">
    <location>
        <begin position="1617"/>
        <end position="1619"/>
    </location>
</feature>
<feature type="helix" evidence="28">
    <location>
        <begin position="1620"/>
        <end position="1627"/>
    </location>
</feature>
<feature type="helix" evidence="28">
    <location>
        <begin position="1638"/>
        <end position="1644"/>
    </location>
</feature>
<feature type="turn" evidence="28">
    <location>
        <begin position="1657"/>
        <end position="1659"/>
    </location>
</feature>
<feature type="turn" evidence="28">
    <location>
        <begin position="1665"/>
        <end position="1667"/>
    </location>
</feature>
<feature type="strand" evidence="28">
    <location>
        <begin position="1671"/>
        <end position="1673"/>
    </location>
</feature>
<feature type="turn" evidence="28">
    <location>
        <begin position="1677"/>
        <end position="1679"/>
    </location>
</feature>
<feature type="strand" evidence="28">
    <location>
        <begin position="1696"/>
        <end position="1700"/>
    </location>
</feature>
<feature type="strand" evidence="28">
    <location>
        <begin position="1703"/>
        <end position="1705"/>
    </location>
</feature>
<feature type="strand" evidence="28">
    <location>
        <begin position="1709"/>
        <end position="1712"/>
    </location>
</feature>
<feature type="turn" evidence="28">
    <location>
        <begin position="1717"/>
        <end position="1719"/>
    </location>
</feature>
<feature type="helix" evidence="28">
    <location>
        <begin position="1720"/>
        <end position="1729"/>
    </location>
</feature>
<feature type="strand" evidence="28">
    <location>
        <begin position="1734"/>
        <end position="1737"/>
    </location>
</feature>
<feature type="strand" evidence="28">
    <location>
        <begin position="1744"/>
        <end position="1747"/>
    </location>
</feature>
<feature type="strand" evidence="28">
    <location>
        <begin position="1755"/>
        <end position="1757"/>
    </location>
</feature>
<feature type="strand" evidence="28">
    <location>
        <begin position="1759"/>
        <end position="1761"/>
    </location>
</feature>
<feature type="strand" evidence="28">
    <location>
        <begin position="1764"/>
        <end position="1773"/>
    </location>
</feature>
<feature type="strand" evidence="28">
    <location>
        <begin position="1775"/>
        <end position="1786"/>
    </location>
</feature>
<feature type="turn" evidence="28">
    <location>
        <begin position="1787"/>
        <end position="1789"/>
    </location>
</feature>
<feature type="strand" evidence="28">
    <location>
        <begin position="1792"/>
        <end position="1800"/>
    </location>
</feature>
<feature type="strand" evidence="28">
    <location>
        <begin position="1805"/>
        <end position="1807"/>
    </location>
</feature>
<feature type="helix" evidence="28">
    <location>
        <begin position="1813"/>
        <end position="1828"/>
    </location>
</feature>
<feature type="strand" evidence="28">
    <location>
        <begin position="1835"/>
        <end position="1843"/>
    </location>
</feature>
<feature type="helix" evidence="28">
    <location>
        <begin position="1844"/>
        <end position="1861"/>
    </location>
</feature>
<feature type="helix" evidence="28">
    <location>
        <begin position="1867"/>
        <end position="1875"/>
    </location>
</feature>
<feature type="helix" evidence="28">
    <location>
        <begin position="1885"/>
        <end position="1900"/>
    </location>
</feature>
<sequence length="1907" mass="211904">MAPTWSPSVVSVVGPVGLFLVLLARGCLAEEPPRFIREPKDQIGVSGGVASFVCQATGDPKPRVTWNKKGKKVNSQRFETIDFDESSGAVLRIQPLRTPRDENVYECVAQNSVGEITIHAKLTVLREDQLPPGFPNIDMGPQLKVVERTRTATMLCAASGNPDPEITWFKDFLPVDPSASNGRIKQLRSGALQIESSEETDQGKYECVATNSAGVRYSSPANLYVRVRRVAPRFSILPMSHEIMPGGNVNITCVAVGSPMPYVKWMQGAEDLTPEDDMPVGRNVLELTDVKDSANYTCVAMSSLGVIEAVAQITVKSLPKAPGTPVVTENTATSITVTWDSGNPDPVSYYVIEYKSKSQDGPYQIKEDITTTRYSIGGLSPNSEYEIWVSAVNSIGQGPPSESVVTRTGEQAPASAPRNVQARMLSATTMIVQWEEPVEPNGLIRGYRVYYTMEPEHPVGNWQKHNVDDSLLTTVGSLLEDETYTVRVLAFTSVGDGPLSDPIQVKTQQGVPGQPMNLRAEAKSETSIGLSWSAPRQESVIKYELLFREGDRGREVGRTFDPTTAFVVEDLKPNTEYAFRLAARSPQGLGAFTAVVRQRTLQAKPSAPPQDVKCTSLRSTAILVSWRPPPPETHNGALVGYSVRYRPLGSEDPDPKEVNNIPPTTTQILLEALEKWTEYRVTAVAYTEVGPGPESSPVVVRTDEDVPSAPPRKVEAEALNATAIRVLWRSPTPGRQHGQIRGYQVHYVRMEGAEARGPPRIKDIMLADAQEMVITNLQPETAYSITVAAYTMKGDGARSKPKVVVTKGAVLGRPTLSVQQTPEGSLLARWEPPADAAEDPVLGYRLQFGREDAAPATLELAAWERRFAAPAHKGATYVFRLAARGRAGLGEEAAAALSIPEDAPRGFPQILGAAGNVSAGSVLLRWLPPVPAERNGAIIKYTVSVREAGAPGPATETELAAAAQPGAETALTLRGLRPETAYELRVRAHTRRGPGPFSPPLRYRLARDPVSPKNFKVKMIMKTSVLLSWEFPDNYNSPTPYKIQYNGLTLDVDGRTTKKLITHLKPHTFYNFVLTNRGSSLGGLQQTVTARTAFNMLSGKPSVAPKPDNDGFIVVYLPDGQSPVTVQNYFIVMVPLRKSRGGQFPVLLGSPEDMDLEELIQDISRLQRRSLRHSRQLEVPRPYIAARFSILPAVFHPGNQKQYGGFDNRGLEPGHRYVLFVLAVLQKNEPTFAASPFSDPFQLDNPDPQPIVDGEEGLIWVIGPVLAVVFIICIVIAILLYKNKPDSKRKDSEPRTKCLLNNADLAPHHPKDPVEMRRINFQTPGMLSHPPIPITDMAEHMERLKANDSLKLSQEYESIDPGQQFTWEHSNLEANKPKNRYANVIAYDHSRVILQPLEGIMGSDYINANYVDGYRRQNAYIATQGPLPETFGDFWRMVWEQRSATVVMMTRLEEKSRIKCDQYWPNRGTETYGFIQVTLLDTMELATFCVRTFSLHKNGSSEKREVRHFQFTAWPDHGVPEYPTPFLAFLRRVKTCNPPDAGPIVVHCSAGVGRTGCFIVIDAMLERIKTEKTVDVYGHVTLMRSQRNYMVQTEDQYGFIHEALLEAVGCGNTEVPARSLYTYIQKLAQVEPGEHVTGMELEFKRLASSKAHTSRFITASLPCNKFKNRLVNILPYESSRVCLQPIRGVEGSDYINASFIDGYRQQKAYIATQGPLAETTEDFWRALWENNSTIVVMLTKLREMGREKCHQYWPAERSARYQYFVVDPMAEYNMPQYILREFKVTDARDGQSRTVRQFQFTDWPEQGAPKSGEGFIDFIGQVHKTKEQFGQDGPISVHCSAGVGRTGVFITLSIVLERMRYEGVVDIFQTVKVLRTQRPAMVQTEDEYQFCFQAALEYLGSFDHYAT</sequence>
<dbReference type="EC" id="3.1.3.48" evidence="20 26"/>
<dbReference type="EMBL" id="X82288">
    <property type="protein sequence ID" value="CAA57732.1"/>
    <property type="molecule type" value="mRNA"/>
</dbReference>
<dbReference type="EMBL" id="D28530">
    <property type="protein sequence ID" value="BAA05886.1"/>
    <property type="molecule type" value="mRNA"/>
</dbReference>
<dbReference type="EMBL" id="AK159320">
    <property type="protein sequence ID" value="BAE34987.1"/>
    <property type="molecule type" value="mRNA"/>
</dbReference>
<dbReference type="EMBL" id="AK169714">
    <property type="protein sequence ID" value="BAE41325.1"/>
    <property type="molecule type" value="mRNA"/>
</dbReference>
<dbReference type="EMBL" id="CT009637">
    <property type="status" value="NOT_ANNOTATED_CDS"/>
    <property type="molecule type" value="Genomic_DNA"/>
</dbReference>
<dbReference type="EMBL" id="BC052462">
    <property type="protein sequence ID" value="AAH52462.1"/>
    <property type="molecule type" value="mRNA"/>
</dbReference>
<dbReference type="EMBL" id="BC083188">
    <property type="protein sequence ID" value="AAH83188.1"/>
    <property type="molecule type" value="mRNA"/>
</dbReference>
<dbReference type="CCDS" id="CCDS37664.1">
    <molecule id="B0V2N1-1"/>
</dbReference>
<dbReference type="CCDS" id="CCDS57103.1">
    <molecule id="B0V2N1-3"/>
</dbReference>
<dbReference type="CCDS" id="CCDS89125.1">
    <molecule id="B0V2N1-4"/>
</dbReference>
<dbReference type="RefSeq" id="NP_001239382.1">
    <molecule id="B0V2N1-3"/>
    <property type="nucleotide sequence ID" value="NM_001252453.2"/>
</dbReference>
<dbReference type="RefSeq" id="NP_001239384.1">
    <molecule id="B0V2N1-4"/>
    <property type="nucleotide sequence ID" value="NM_001252455.2"/>
</dbReference>
<dbReference type="RefSeq" id="NP_001239385.1">
    <molecule id="B0V2N1-3"/>
    <property type="nucleotide sequence ID" value="NM_001252456.2"/>
</dbReference>
<dbReference type="RefSeq" id="NP_035348.2">
    <molecule id="B0V2N1-1"/>
    <property type="nucleotide sequence ID" value="NM_011218.3"/>
</dbReference>
<dbReference type="PDB" id="3SR9">
    <property type="method" value="X-ray"/>
    <property type="resolution" value="2.40 A"/>
    <property type="chains" value="A=1326-1901"/>
</dbReference>
<dbReference type="PDBsum" id="3SR9"/>
<dbReference type="SMR" id="B0V2N1"/>
<dbReference type="BioGRID" id="202507">
    <property type="interactions" value="23"/>
</dbReference>
<dbReference type="FunCoup" id="B0V2N1">
    <property type="interactions" value="994"/>
</dbReference>
<dbReference type="IntAct" id="B0V2N1">
    <property type="interactions" value="5"/>
</dbReference>
<dbReference type="MINT" id="B0V2N1"/>
<dbReference type="STRING" id="10090.ENSMUSP00000064048"/>
<dbReference type="GlyConnect" id="2442">
    <molecule id="B0V2N1-6"/>
    <property type="glycosylation" value="2 N-Linked glycans (1 site)"/>
</dbReference>
<dbReference type="GlyCosmos" id="B0V2N1">
    <property type="glycosylation" value="4 sites, No reported glycans"/>
</dbReference>
<dbReference type="GlyGen" id="B0V2N1">
    <property type="glycosylation" value="6 sites, 4 N-linked glycans (4 sites), 1 O-linked glycan (1 site)"/>
</dbReference>
<dbReference type="iPTMnet" id="B0V2N1"/>
<dbReference type="PhosphoSitePlus" id="B0V2N1"/>
<dbReference type="SwissPalm" id="B0V2N1"/>
<dbReference type="jPOST" id="B0V2N1"/>
<dbReference type="PaxDb" id="10090-ENSMUSP00000064048"/>
<dbReference type="PeptideAtlas" id="B0V2N1"/>
<dbReference type="ProteomicsDB" id="302015">
    <molecule id="B0V2N1-1"/>
</dbReference>
<dbReference type="ProteomicsDB" id="302016">
    <molecule id="B0V2N1-2"/>
</dbReference>
<dbReference type="ProteomicsDB" id="302017">
    <molecule id="B0V2N1-3"/>
</dbReference>
<dbReference type="ProteomicsDB" id="302018">
    <molecule id="B0V2N1-4"/>
</dbReference>
<dbReference type="ProteomicsDB" id="302019">
    <molecule id="B0V2N1-5"/>
</dbReference>
<dbReference type="ProteomicsDB" id="302020">
    <molecule id="B0V2N1-6"/>
</dbReference>
<dbReference type="Pumba" id="B0V2N1"/>
<dbReference type="ABCD" id="B0V2N1">
    <property type="antibodies" value="1 sequenced antibody"/>
</dbReference>
<dbReference type="Antibodypedia" id="23795">
    <property type="antibodies" value="219 antibodies from 27 providers"/>
</dbReference>
<dbReference type="DNASU" id="19280"/>
<dbReference type="Ensembl" id="ENSMUST00000067538.6">
    <molecule id="B0V2N1-1"/>
    <property type="protein sequence ID" value="ENSMUSP00000064048.6"/>
    <property type="gene ID" value="ENSMUSG00000013236.18"/>
</dbReference>
<dbReference type="Ensembl" id="ENSMUST00000086828.10">
    <molecule id="B0V2N1-3"/>
    <property type="protein sequence ID" value="ENSMUSP00000084038.4"/>
    <property type="gene ID" value="ENSMUSG00000013236.18"/>
</dbReference>
<dbReference type="Ensembl" id="ENSMUST00000223859.2">
    <molecule id="B0V2N1-4"/>
    <property type="protein sequence ID" value="ENSMUSP00000153134.2"/>
    <property type="gene ID" value="ENSMUSG00000013236.18"/>
</dbReference>
<dbReference type="GeneID" id="19280"/>
<dbReference type="KEGG" id="mmu:19280"/>
<dbReference type="UCSC" id="uc008dbx.3">
    <molecule id="B0V2N1-3"/>
    <property type="organism name" value="mouse"/>
</dbReference>
<dbReference type="UCSC" id="uc008dby.2">
    <molecule id="B0V2N1-1"/>
    <property type="organism name" value="mouse"/>
</dbReference>
<dbReference type="UCSC" id="uc008dca.2">
    <molecule id="B0V2N1-4"/>
    <property type="organism name" value="mouse"/>
</dbReference>
<dbReference type="AGR" id="MGI:97815"/>
<dbReference type="CTD" id="5802"/>
<dbReference type="MGI" id="MGI:97815">
    <property type="gene designation" value="Ptprs"/>
</dbReference>
<dbReference type="VEuPathDB" id="HostDB:ENSMUSG00000013236"/>
<dbReference type="eggNOG" id="KOG4228">
    <property type="taxonomic scope" value="Eukaryota"/>
</dbReference>
<dbReference type="GeneTree" id="ENSGT00940000153617"/>
<dbReference type="HOGENOM" id="CLU_001645_4_1_1"/>
<dbReference type="InParanoid" id="B0V2N1"/>
<dbReference type="OMA" id="KPHTEYA"/>
<dbReference type="OrthoDB" id="10253954at2759"/>
<dbReference type="PhylomeDB" id="B0V2N1"/>
<dbReference type="TreeFam" id="TF312900"/>
<dbReference type="Reactome" id="R-MMU-388844">
    <property type="pathway name" value="Receptor-type tyrosine-protein phosphatases"/>
</dbReference>
<dbReference type="Reactome" id="R-MMU-8849932">
    <property type="pathway name" value="Synaptic adhesion-like molecules"/>
</dbReference>
<dbReference type="BioGRID-ORCS" id="19280">
    <property type="hits" value="4 hits in 81 CRISPR screens"/>
</dbReference>
<dbReference type="CD-CODE" id="CE726F99">
    <property type="entry name" value="Postsynaptic density"/>
</dbReference>
<dbReference type="ChiTaRS" id="Ptprs">
    <property type="organism name" value="mouse"/>
</dbReference>
<dbReference type="EvolutionaryTrace" id="B0V2N1"/>
<dbReference type="PRO" id="PR:B0V2N1"/>
<dbReference type="Proteomes" id="UP000000589">
    <property type="component" value="Chromosome 17"/>
</dbReference>
<dbReference type="RNAct" id="B0V2N1">
    <property type="molecule type" value="protein"/>
</dbReference>
<dbReference type="Bgee" id="ENSMUSG00000013236">
    <property type="expression patterns" value="Expressed in cortical plate and 276 other cell types or tissues"/>
</dbReference>
<dbReference type="ExpressionAtlas" id="B0V2N1">
    <property type="expression patterns" value="baseline and differential"/>
</dbReference>
<dbReference type="GO" id="GO:0030424">
    <property type="term" value="C:axon"/>
    <property type="evidence" value="ECO:0000250"/>
    <property type="project" value="UniProtKB"/>
</dbReference>
<dbReference type="GO" id="GO:0005829">
    <property type="term" value="C:cytosol"/>
    <property type="evidence" value="ECO:0007669"/>
    <property type="project" value="Ensembl"/>
</dbReference>
<dbReference type="GO" id="GO:0098978">
    <property type="term" value="C:glutamatergic synapse"/>
    <property type="evidence" value="ECO:0000314"/>
    <property type="project" value="SynGO"/>
</dbReference>
<dbReference type="GO" id="GO:0030426">
    <property type="term" value="C:growth cone"/>
    <property type="evidence" value="ECO:0007669"/>
    <property type="project" value="UniProtKB-SubCell"/>
</dbReference>
<dbReference type="GO" id="GO:0043204">
    <property type="term" value="C:perikaryon"/>
    <property type="evidence" value="ECO:0007669"/>
    <property type="project" value="UniProtKB-SubCell"/>
</dbReference>
<dbReference type="GO" id="GO:0005886">
    <property type="term" value="C:plasma membrane"/>
    <property type="evidence" value="ECO:0000314"/>
    <property type="project" value="UniProtKB"/>
</dbReference>
<dbReference type="GO" id="GO:0098839">
    <property type="term" value="C:postsynaptic density membrane"/>
    <property type="evidence" value="ECO:0000250"/>
    <property type="project" value="UniProtKB"/>
</dbReference>
<dbReference type="GO" id="GO:0042734">
    <property type="term" value="C:presynaptic membrane"/>
    <property type="evidence" value="ECO:0000314"/>
    <property type="project" value="SynGO"/>
</dbReference>
<dbReference type="GO" id="GO:0098685">
    <property type="term" value="C:Schaffer collateral - CA1 synapse"/>
    <property type="evidence" value="ECO:0000314"/>
    <property type="project" value="SynGO"/>
</dbReference>
<dbReference type="GO" id="GO:0030672">
    <property type="term" value="C:synaptic vesicle membrane"/>
    <property type="evidence" value="ECO:0000250"/>
    <property type="project" value="UniProtKB"/>
</dbReference>
<dbReference type="GO" id="GO:0035374">
    <property type="term" value="F:chondroitin sulfate binding"/>
    <property type="evidence" value="ECO:0000314"/>
    <property type="project" value="UniProtKB"/>
</dbReference>
<dbReference type="GO" id="GO:0043395">
    <property type="term" value="F:heparan sulfate proteoglycan binding"/>
    <property type="evidence" value="ECO:0000250"/>
    <property type="project" value="UniProtKB"/>
</dbReference>
<dbReference type="GO" id="GO:0008201">
    <property type="term" value="F:heparin binding"/>
    <property type="evidence" value="ECO:0000314"/>
    <property type="project" value="UniProtKB"/>
</dbReference>
<dbReference type="GO" id="GO:0004725">
    <property type="term" value="F:protein tyrosine phosphatase activity"/>
    <property type="evidence" value="ECO:0000314"/>
    <property type="project" value="UniProtKB"/>
</dbReference>
<dbReference type="GO" id="GO:0021549">
    <property type="term" value="P:cerebellum development"/>
    <property type="evidence" value="ECO:0000315"/>
    <property type="project" value="MGI"/>
</dbReference>
<dbReference type="GO" id="GO:0021987">
    <property type="term" value="P:cerebral cortex development"/>
    <property type="evidence" value="ECO:0000315"/>
    <property type="project" value="MGI"/>
</dbReference>
<dbReference type="GO" id="GO:0022038">
    <property type="term" value="P:corpus callosum development"/>
    <property type="evidence" value="ECO:0000315"/>
    <property type="project" value="MGI"/>
</dbReference>
<dbReference type="GO" id="GO:0090557">
    <property type="term" value="P:establishment of endothelial intestinal barrier"/>
    <property type="evidence" value="ECO:0000315"/>
    <property type="project" value="MGI"/>
</dbReference>
<dbReference type="GO" id="GO:0021766">
    <property type="term" value="P:hippocampus development"/>
    <property type="evidence" value="ECO:0000315"/>
    <property type="project" value="MGI"/>
</dbReference>
<dbReference type="GO" id="GO:0050804">
    <property type="term" value="P:modulation of chemical synaptic transmission"/>
    <property type="evidence" value="ECO:0000314"/>
    <property type="project" value="SynGO"/>
</dbReference>
<dbReference type="GO" id="GO:0030517">
    <property type="term" value="P:negative regulation of axon extension"/>
    <property type="evidence" value="ECO:0000315"/>
    <property type="project" value="UniProtKB"/>
</dbReference>
<dbReference type="GO" id="GO:0048681">
    <property type="term" value="P:negative regulation of axon regeneration"/>
    <property type="evidence" value="ECO:0000315"/>
    <property type="project" value="UniProtKB"/>
</dbReference>
<dbReference type="GO" id="GO:0048671">
    <property type="term" value="P:negative regulation of collateral sprouting"/>
    <property type="evidence" value="ECO:0000315"/>
    <property type="project" value="UniProtKB"/>
</dbReference>
<dbReference type="GO" id="GO:0061000">
    <property type="term" value="P:negative regulation of dendritic spine development"/>
    <property type="evidence" value="ECO:0000315"/>
    <property type="project" value="UniProtKB"/>
</dbReference>
<dbReference type="GO" id="GO:0032687">
    <property type="term" value="P:negative regulation of interferon-alpha production"/>
    <property type="evidence" value="ECO:0007669"/>
    <property type="project" value="Ensembl"/>
</dbReference>
<dbReference type="GO" id="GO:0032688">
    <property type="term" value="P:negative regulation of interferon-beta production"/>
    <property type="evidence" value="ECO:0007669"/>
    <property type="project" value="Ensembl"/>
</dbReference>
<dbReference type="GO" id="GO:0010977">
    <property type="term" value="P:negative regulation of neuron projection development"/>
    <property type="evidence" value="ECO:0000315"/>
    <property type="project" value="UniProtKB"/>
</dbReference>
<dbReference type="GO" id="GO:0034164">
    <property type="term" value="P:negative regulation of toll-like receptor 9 signaling pathway"/>
    <property type="evidence" value="ECO:0007669"/>
    <property type="project" value="Ensembl"/>
</dbReference>
<dbReference type="GO" id="GO:0035335">
    <property type="term" value="P:peptidyl-tyrosine dephosphorylation"/>
    <property type="evidence" value="ECO:0000314"/>
    <property type="project" value="UniProtKB"/>
</dbReference>
<dbReference type="GO" id="GO:0099151">
    <property type="term" value="P:regulation of postsynaptic density assembly"/>
    <property type="evidence" value="ECO:0000314"/>
    <property type="project" value="SynGO"/>
</dbReference>
<dbReference type="GO" id="GO:0021510">
    <property type="term" value="P:spinal cord development"/>
    <property type="evidence" value="ECO:0000315"/>
    <property type="project" value="MGI"/>
</dbReference>
<dbReference type="GO" id="GO:0050808">
    <property type="term" value="P:synapse organization"/>
    <property type="evidence" value="ECO:0000314"/>
    <property type="project" value="SynGO"/>
</dbReference>
<dbReference type="GO" id="GO:0099560">
    <property type="term" value="P:synaptic membrane adhesion"/>
    <property type="evidence" value="ECO:0007669"/>
    <property type="project" value="Ensembl"/>
</dbReference>
<dbReference type="GO" id="GO:0099537">
    <property type="term" value="P:trans-synaptic signaling"/>
    <property type="evidence" value="ECO:0000314"/>
    <property type="project" value="SynGO"/>
</dbReference>
<dbReference type="CDD" id="cd00063">
    <property type="entry name" value="FN3"/>
    <property type="match status" value="7"/>
</dbReference>
<dbReference type="CDD" id="cd05738">
    <property type="entry name" value="IgI_2_RPTP_IIa_LAR_like"/>
    <property type="match status" value="1"/>
</dbReference>
<dbReference type="CDD" id="cd05739">
    <property type="entry name" value="IgI_3_RPTP_IIa_LAR_like"/>
    <property type="match status" value="1"/>
</dbReference>
<dbReference type="CDD" id="cd14627">
    <property type="entry name" value="R-PTP-S-2"/>
    <property type="match status" value="1"/>
</dbReference>
<dbReference type="CDD" id="cd14625">
    <property type="entry name" value="R-PTPc-S-1"/>
    <property type="match status" value="1"/>
</dbReference>
<dbReference type="FunFam" id="2.60.40.10:FF:000549">
    <property type="entry name" value="Protein tyrosine phosphatase, receptor type S"/>
    <property type="match status" value="1"/>
</dbReference>
<dbReference type="FunFam" id="2.60.40.10:FF:000010">
    <property type="entry name" value="receptor-type tyrosine-protein phosphatase delta isoform X1"/>
    <property type="match status" value="1"/>
</dbReference>
<dbReference type="FunFam" id="2.60.40.10:FF:000027">
    <property type="entry name" value="receptor-type tyrosine-protein phosphatase delta isoform X1"/>
    <property type="match status" value="1"/>
</dbReference>
<dbReference type="FunFam" id="2.60.40.10:FF:000036">
    <property type="entry name" value="receptor-type tyrosine-protein phosphatase delta isoform X1"/>
    <property type="match status" value="1"/>
</dbReference>
<dbReference type="FunFam" id="2.60.40.10:FF:000066">
    <property type="entry name" value="receptor-type tyrosine-protein phosphatase delta isoform X1"/>
    <property type="match status" value="1"/>
</dbReference>
<dbReference type="FunFam" id="2.60.40.10:FF:000068">
    <property type="entry name" value="receptor-type tyrosine-protein phosphatase delta isoform X1"/>
    <property type="match status" value="1"/>
</dbReference>
<dbReference type="FunFam" id="2.60.40.10:FF:000144">
    <property type="entry name" value="receptor-type tyrosine-protein phosphatase delta isoform X1"/>
    <property type="match status" value="1"/>
</dbReference>
<dbReference type="FunFam" id="2.60.40.10:FF:000015">
    <property type="entry name" value="receptor-type tyrosine-protein phosphatase delta isoform X2"/>
    <property type="match status" value="1"/>
</dbReference>
<dbReference type="FunFam" id="2.60.40.10:FF:000023">
    <property type="entry name" value="receptor-type tyrosine-protein phosphatase delta isoform X2"/>
    <property type="match status" value="1"/>
</dbReference>
<dbReference type="FunFam" id="2.60.40.10:FF:000082">
    <property type="entry name" value="receptor-type tyrosine-protein phosphatase delta isoform X2"/>
    <property type="match status" value="1"/>
</dbReference>
<dbReference type="FunFam" id="3.90.190.10:FF:000002">
    <property type="entry name" value="receptor-type tyrosine-protein phosphatase delta isoform X2"/>
    <property type="match status" value="1"/>
</dbReference>
<dbReference type="FunFam" id="3.90.190.10:FF:000001">
    <property type="entry name" value="Receptor-type tyrosine-protein phosphatase F isoform A"/>
    <property type="match status" value="1"/>
</dbReference>
<dbReference type="FunFam" id="2.60.40.10:FF:000098">
    <property type="entry name" value="receptor-type tyrosine-protein phosphatase F isoform X1"/>
    <property type="match status" value="1"/>
</dbReference>
<dbReference type="Gene3D" id="2.60.40.10">
    <property type="entry name" value="Immunoglobulins"/>
    <property type="match status" value="11"/>
</dbReference>
<dbReference type="Gene3D" id="3.90.190.10">
    <property type="entry name" value="Protein tyrosine phosphatase superfamily"/>
    <property type="match status" value="2"/>
</dbReference>
<dbReference type="InterPro" id="IPR003961">
    <property type="entry name" value="FN3_dom"/>
</dbReference>
<dbReference type="InterPro" id="IPR036116">
    <property type="entry name" value="FN3_sf"/>
</dbReference>
<dbReference type="InterPro" id="IPR007110">
    <property type="entry name" value="Ig-like_dom"/>
</dbReference>
<dbReference type="InterPro" id="IPR036179">
    <property type="entry name" value="Ig-like_dom_sf"/>
</dbReference>
<dbReference type="InterPro" id="IPR013783">
    <property type="entry name" value="Ig-like_fold"/>
</dbReference>
<dbReference type="InterPro" id="IPR013098">
    <property type="entry name" value="Ig_I-set"/>
</dbReference>
<dbReference type="InterPro" id="IPR003599">
    <property type="entry name" value="Ig_sub"/>
</dbReference>
<dbReference type="InterPro" id="IPR003598">
    <property type="entry name" value="Ig_sub2"/>
</dbReference>
<dbReference type="InterPro" id="IPR029021">
    <property type="entry name" value="Prot-tyrosine_phosphatase-like"/>
</dbReference>
<dbReference type="InterPro" id="IPR000242">
    <property type="entry name" value="PTP_cat"/>
</dbReference>
<dbReference type="InterPro" id="IPR050713">
    <property type="entry name" value="RTP_Phos/Ushers"/>
</dbReference>
<dbReference type="InterPro" id="IPR016130">
    <property type="entry name" value="Tyr_Pase_AS"/>
</dbReference>
<dbReference type="InterPro" id="IPR003595">
    <property type="entry name" value="Tyr_Pase_cat"/>
</dbReference>
<dbReference type="InterPro" id="IPR000387">
    <property type="entry name" value="Tyr_Pase_dom"/>
</dbReference>
<dbReference type="PANTHER" id="PTHR46957">
    <property type="entry name" value="CYTOKINE RECEPTOR"/>
    <property type="match status" value="1"/>
</dbReference>
<dbReference type="PANTHER" id="PTHR46957:SF6">
    <property type="entry name" value="PROTEIN-TYROSINE-PHOSPHATASE"/>
    <property type="match status" value="1"/>
</dbReference>
<dbReference type="Pfam" id="PF00041">
    <property type="entry name" value="fn3"/>
    <property type="match status" value="7"/>
</dbReference>
<dbReference type="Pfam" id="PF07679">
    <property type="entry name" value="I-set"/>
    <property type="match status" value="2"/>
</dbReference>
<dbReference type="Pfam" id="PF13927">
    <property type="entry name" value="Ig_3"/>
    <property type="match status" value="1"/>
</dbReference>
<dbReference type="Pfam" id="PF00102">
    <property type="entry name" value="Y_phosphatase"/>
    <property type="match status" value="2"/>
</dbReference>
<dbReference type="PRINTS" id="PR00014">
    <property type="entry name" value="FNTYPEIII"/>
</dbReference>
<dbReference type="PRINTS" id="PR00700">
    <property type="entry name" value="PRTYPHPHTASE"/>
</dbReference>
<dbReference type="SMART" id="SM00060">
    <property type="entry name" value="FN3"/>
    <property type="match status" value="8"/>
</dbReference>
<dbReference type="SMART" id="SM00409">
    <property type="entry name" value="IG"/>
    <property type="match status" value="3"/>
</dbReference>
<dbReference type="SMART" id="SM00408">
    <property type="entry name" value="IGc2"/>
    <property type="match status" value="3"/>
</dbReference>
<dbReference type="SMART" id="SM00194">
    <property type="entry name" value="PTPc"/>
    <property type="match status" value="2"/>
</dbReference>
<dbReference type="SMART" id="SM00404">
    <property type="entry name" value="PTPc_motif"/>
    <property type="match status" value="2"/>
</dbReference>
<dbReference type="SUPFAM" id="SSF52799">
    <property type="entry name" value="(Phosphotyrosine protein) phosphatases II"/>
    <property type="match status" value="2"/>
</dbReference>
<dbReference type="SUPFAM" id="SSF49265">
    <property type="entry name" value="Fibronectin type III"/>
    <property type="match status" value="5"/>
</dbReference>
<dbReference type="SUPFAM" id="SSF48726">
    <property type="entry name" value="Immunoglobulin"/>
    <property type="match status" value="3"/>
</dbReference>
<dbReference type="PROSITE" id="PS50853">
    <property type="entry name" value="FN3"/>
    <property type="match status" value="8"/>
</dbReference>
<dbReference type="PROSITE" id="PS50835">
    <property type="entry name" value="IG_LIKE"/>
    <property type="match status" value="3"/>
</dbReference>
<dbReference type="PROSITE" id="PS00383">
    <property type="entry name" value="TYR_PHOSPHATASE_1"/>
    <property type="match status" value="2"/>
</dbReference>
<dbReference type="PROSITE" id="PS50056">
    <property type="entry name" value="TYR_PHOSPHATASE_2"/>
    <property type="match status" value="2"/>
</dbReference>
<dbReference type="PROSITE" id="PS50055">
    <property type="entry name" value="TYR_PHOSPHATASE_PTP"/>
    <property type="match status" value="2"/>
</dbReference>
<evidence type="ECO:0000250" key="1"/>
<evidence type="ECO:0000250" key="2">
    <source>
        <dbReference type="UniProtKB" id="F1NWE3"/>
    </source>
</evidence>
<evidence type="ECO:0000250" key="3">
    <source>
        <dbReference type="UniProtKB" id="Q13332"/>
    </source>
</evidence>
<evidence type="ECO:0000250" key="4">
    <source>
        <dbReference type="UniProtKB" id="Q64605"/>
    </source>
</evidence>
<evidence type="ECO:0000255" key="5"/>
<evidence type="ECO:0000255" key="6">
    <source>
        <dbReference type="PROSITE-ProRule" id="PRU00114"/>
    </source>
</evidence>
<evidence type="ECO:0000255" key="7">
    <source>
        <dbReference type="PROSITE-ProRule" id="PRU00160"/>
    </source>
</evidence>
<evidence type="ECO:0000255" key="8">
    <source>
        <dbReference type="PROSITE-ProRule" id="PRU00316"/>
    </source>
</evidence>
<evidence type="ECO:0000255" key="9">
    <source>
        <dbReference type="PROSITE-ProRule" id="PRU10044"/>
    </source>
</evidence>
<evidence type="ECO:0000256" key="10">
    <source>
        <dbReference type="SAM" id="MobiDB-lite"/>
    </source>
</evidence>
<evidence type="ECO:0000269" key="11">
    <source>
    </source>
</evidence>
<evidence type="ECO:0000269" key="12">
    <source>
    </source>
</evidence>
<evidence type="ECO:0000269" key="13">
    <source>
    </source>
</evidence>
<evidence type="ECO:0000269" key="14">
    <source>
    </source>
</evidence>
<evidence type="ECO:0000269" key="15">
    <source>
    </source>
</evidence>
<evidence type="ECO:0000269" key="16">
    <source>
    </source>
</evidence>
<evidence type="ECO:0000269" key="17">
    <source>
    </source>
</evidence>
<evidence type="ECO:0000269" key="18">
    <source>
    </source>
</evidence>
<evidence type="ECO:0000269" key="19">
    <source>
    </source>
</evidence>
<evidence type="ECO:0000269" key="20">
    <source>
    </source>
</evidence>
<evidence type="ECO:0000303" key="21">
    <source>
    </source>
</evidence>
<evidence type="ECO:0000303" key="22">
    <source>
    </source>
</evidence>
<evidence type="ECO:0000303" key="23">
    <source>
    </source>
</evidence>
<evidence type="ECO:0000303" key="24">
    <source ref="2"/>
</evidence>
<evidence type="ECO:0000305" key="25"/>
<evidence type="ECO:0000305" key="26">
    <source>
    </source>
</evidence>
<evidence type="ECO:0007744" key="27">
    <source>
        <dbReference type="PDB" id="3SR9"/>
    </source>
</evidence>
<evidence type="ECO:0007829" key="28">
    <source>
        <dbReference type="PDB" id="3SR9"/>
    </source>
</evidence>
<gene>
    <name type="primary">Ptprs</name>
</gene>